<reference key="1">
    <citation type="journal article" date="1993" name="Virus Res.">
        <title>Analysis of the nucleotide sequence of a 43 kbp segment of the genome of variola virus India-1967 strain.</title>
        <authorList>
            <person name="Shchelkunov S.N."/>
            <person name="Blinov V.M."/>
            <person name="Resenchuk S.M."/>
            <person name="Totmenin A.V."/>
            <person name="Sandakhchiev L.S."/>
        </authorList>
    </citation>
    <scope>NUCLEOTIDE SEQUENCE [GENOMIC DNA]</scope>
</reference>
<reference key="2">
    <citation type="journal article" date="1993" name="FEBS Lett.">
        <title>Genes of variola and vaccinia viruses necessary to overcome the host protective mechanisms.</title>
        <authorList>
            <person name="Shchelkunov S.N."/>
            <person name="Blinov V.M."/>
            <person name="Sandakhchiev L.S."/>
        </authorList>
    </citation>
    <scope>NUCLEOTIDE SEQUENCE [GENOMIC DNA]</scope>
</reference>
<accession>P0DOM1</accession>
<accession>P33809</accession>
<accession>Q76Q36</accession>
<accession>Q85370</accession>
<comment type="function">
    <text evidence="1">Polymerase that creates the 3'-poly(A) tail of mRNA's.</text>
</comment>
<comment type="catalytic activity">
    <reaction evidence="1">
        <text>RNA(n) + ATP = RNA(n)-3'-adenine ribonucleotide + diphosphate</text>
        <dbReference type="Rhea" id="RHEA:11332"/>
        <dbReference type="Rhea" id="RHEA-COMP:14527"/>
        <dbReference type="Rhea" id="RHEA-COMP:17347"/>
        <dbReference type="ChEBI" id="CHEBI:30616"/>
        <dbReference type="ChEBI" id="CHEBI:33019"/>
        <dbReference type="ChEBI" id="CHEBI:140395"/>
        <dbReference type="ChEBI" id="CHEBI:173115"/>
        <dbReference type="EC" id="2.7.7.19"/>
    </reaction>
</comment>
<comment type="subunit">
    <text evidence="1">Heterodimer of a large (catalytic) subunit and a small (regulatory) subunit.</text>
</comment>
<comment type="induction">
    <text evidence="1">Expressed in the early phase of the viral replicative cycle.</text>
</comment>
<comment type="similarity">
    <text evidence="3">Belongs to the poxviridae poly(A) polymerase catalytic subunit family.</text>
</comment>
<evidence type="ECO:0000250" key="1">
    <source>
        <dbReference type="UniProtKB" id="P23371"/>
    </source>
</evidence>
<evidence type="ECO:0000255" key="2">
    <source>
        <dbReference type="PIRSR" id="PIRSR015693-50"/>
    </source>
</evidence>
<evidence type="ECO:0000305" key="3"/>
<gene>
    <name type="primary">OPG063</name>
    <name type="synonym">PAPL</name>
    <name type="ORF">C1L</name>
    <name type="ORF">E1L</name>
</gene>
<dbReference type="EC" id="2.7.7.19"/>
<dbReference type="EMBL" id="X69198">
    <property type="protein sequence ID" value="CAA48983.1"/>
    <property type="molecule type" value="Genomic_DNA"/>
</dbReference>
<dbReference type="PIR" id="D36841">
    <property type="entry name" value="D36841"/>
</dbReference>
<dbReference type="RefSeq" id="NP_042086.1">
    <property type="nucleotide sequence ID" value="NC_001611.1"/>
</dbReference>
<dbReference type="SMR" id="P0DOM1"/>
<dbReference type="GeneID" id="1486407"/>
<dbReference type="KEGG" id="vg:1486407"/>
<dbReference type="Proteomes" id="UP000002060">
    <property type="component" value="Segment"/>
</dbReference>
<dbReference type="GO" id="GO:0005524">
    <property type="term" value="F:ATP binding"/>
    <property type="evidence" value="ECO:0007669"/>
    <property type="project" value="UniProtKB-KW"/>
</dbReference>
<dbReference type="GO" id="GO:0046872">
    <property type="term" value="F:metal ion binding"/>
    <property type="evidence" value="ECO:0007669"/>
    <property type="project" value="UniProtKB-KW"/>
</dbReference>
<dbReference type="GO" id="GO:1990817">
    <property type="term" value="F:poly(A) RNA polymerase activity"/>
    <property type="evidence" value="ECO:0007669"/>
    <property type="project" value="UniProtKB-EC"/>
</dbReference>
<dbReference type="GO" id="GO:0006397">
    <property type="term" value="P:mRNA processing"/>
    <property type="evidence" value="ECO:0007669"/>
    <property type="project" value="UniProtKB-KW"/>
</dbReference>
<dbReference type="CDD" id="cd20919">
    <property type="entry name" value="polyA_pol_Pox"/>
    <property type="match status" value="1"/>
</dbReference>
<dbReference type="Gene3D" id="1.20.1270.320">
    <property type="entry name" value="Poxvirus poly(A) polymerase, N domain"/>
    <property type="match status" value="1"/>
</dbReference>
<dbReference type="Gene3D" id="3.30.460.60">
    <property type="entry name" value="Poxvirus poly(A) polymerase, nucleotidyltransferase domain"/>
    <property type="match status" value="1"/>
</dbReference>
<dbReference type="InterPro" id="IPR004976">
    <property type="entry name" value="PolyA_pol_cat_Poxvir"/>
</dbReference>
<dbReference type="InterPro" id="IPR037265">
    <property type="entry name" value="PolyA_pol_cat_sf"/>
</dbReference>
<dbReference type="InterPro" id="IPR024231">
    <property type="entry name" value="PolyA_pol_nucTrfase_Poxvir"/>
</dbReference>
<dbReference type="InterPro" id="IPR038419">
    <property type="entry name" value="PolyA_pol_nucTrfase_sf_Poxvir"/>
</dbReference>
<dbReference type="InterPro" id="IPR024397">
    <property type="entry name" value="Poxvirus_polyA_pol_cat_C"/>
</dbReference>
<dbReference type="InterPro" id="IPR024398">
    <property type="entry name" value="Poxvirus_polyA_pol_cat_N"/>
</dbReference>
<dbReference type="InterPro" id="IPR038337">
    <property type="entry name" value="Poxvirus_polyA_pol_cat_N_sf"/>
</dbReference>
<dbReference type="Pfam" id="PF03296">
    <property type="entry name" value="Pox_polyA_pol"/>
    <property type="match status" value="1"/>
</dbReference>
<dbReference type="Pfam" id="PF12629">
    <property type="entry name" value="Pox_polyA_pol_C"/>
    <property type="match status" value="1"/>
</dbReference>
<dbReference type="Pfam" id="PF12630">
    <property type="entry name" value="Pox_polyA_pol_N"/>
    <property type="match status" value="1"/>
</dbReference>
<dbReference type="PIRSF" id="PIRSF015693">
    <property type="entry name" value="VAC-48L_nuct"/>
    <property type="match status" value="1"/>
</dbReference>
<dbReference type="SUPFAM" id="SSF160957">
    <property type="entry name" value="Poly(A) polymerase catalytic subunit-like"/>
    <property type="match status" value="1"/>
</dbReference>
<organismHost>
    <name type="scientific">Homo sapiens</name>
    <name type="common">Human</name>
    <dbReference type="NCBI Taxonomy" id="9606"/>
</organismHost>
<proteinExistence type="inferred from homology"/>
<protein>
    <recommendedName>
        <fullName>Poly(A) polymerase catalytic subunit</fullName>
        <ecNumber>2.7.7.19</ecNumber>
    </recommendedName>
    <alternativeName>
        <fullName>Poly(A) polymerase large subunit</fullName>
        <shortName>PAP-L</shortName>
    </alternativeName>
    <alternativeName>
        <fullName>VP55</fullName>
    </alternativeName>
</protein>
<keyword id="KW-0067">ATP-binding</keyword>
<keyword id="KW-0106">Calcium</keyword>
<keyword id="KW-0244">Early protein</keyword>
<keyword id="KW-0479">Metal-binding</keyword>
<keyword id="KW-0507">mRNA processing</keyword>
<keyword id="KW-0547">Nucleotide-binding</keyword>
<keyword id="KW-1185">Reference proteome</keyword>
<keyword id="KW-0804">Transcription</keyword>
<keyword id="KW-0808">Transferase</keyword>
<name>PAP1_VAR67</name>
<sequence>MNRNPDHNTFPNITLKIIETYLGRLPSVNEYHMLKLQTRNIQKITVFNKDIFVSLVKKNKKRFFSDVDTSASEIKDRILSYFSKQTQTYNIGKLFTIIELQSVLVTTYTNILGVLTIKAPNVISSKISYNVTSMEELARDMLNSMNVAVIDKAKVMGRHNVSSLVKNVNKLMEEYLRRHNKSCICYGSYSLYLINPNIRYGDIDILQTNSRTFLIDLAFLIKFITGNNIILSKIPYLRNYMVIKDENDNHIIDSFNIRQDTMNVVPKIFIDNIYIVDPTFQLLNMIKMFSQIDRLEDLSKDPEKFNARMATMLEYVRYTHGIVFDGKRNNMPMKCIIDENNRVVTVTTKDYFSFKKCLVYLDENVLSSDILDLNADTSCDFESVTNSVYLIHDNIMYTYFSNTILLSDKGKVHEISARGLCAHILLYQMLTSGAYKQCLSDLLNSMMNRDKIPIYSHTERDKKHGRHGFINIEKDIIVF</sequence>
<organism>
    <name type="scientific">Variola virus (isolate Human/India/Ind3/1967)</name>
    <name type="common">VARV</name>
    <name type="synonym">Smallpox virus</name>
    <dbReference type="NCBI Taxonomy" id="587200"/>
    <lineage>
        <taxon>Viruses</taxon>
        <taxon>Varidnaviria</taxon>
        <taxon>Bamfordvirae</taxon>
        <taxon>Nucleocytoviricota</taxon>
        <taxon>Pokkesviricetes</taxon>
        <taxon>Chitovirales</taxon>
        <taxon>Poxviridae</taxon>
        <taxon>Chordopoxvirinae</taxon>
        <taxon>Orthopoxvirus</taxon>
        <taxon>Variola virus</taxon>
    </lineage>
</organism>
<feature type="chain" id="PRO_0000099108" description="Poly(A) polymerase catalytic subunit">
    <location>
        <begin position="1"/>
        <end position="479"/>
    </location>
</feature>
<feature type="active site" evidence="2">
    <location>
        <position position="202"/>
    </location>
</feature>
<feature type="active site" evidence="2">
    <location>
        <position position="204"/>
    </location>
</feature>
<feature type="binding site" evidence="1">
    <location>
        <position position="202"/>
    </location>
    <ligand>
        <name>Ca(2+)</name>
        <dbReference type="ChEBI" id="CHEBI:29108"/>
        <label>1</label>
    </ligand>
</feature>
<feature type="binding site" evidence="1">
    <location>
        <position position="202"/>
    </location>
    <ligand>
        <name>Ca(2+)</name>
        <dbReference type="ChEBI" id="CHEBI:29108"/>
        <label>2</label>
    </ligand>
</feature>
<feature type="binding site" evidence="1">
    <location>
        <position position="204"/>
    </location>
    <ligand>
        <name>Ca(2+)</name>
        <dbReference type="ChEBI" id="CHEBI:29108"/>
        <label>1</label>
    </ligand>
</feature>
<feature type="binding site" evidence="1">
    <location>
        <position position="204"/>
    </location>
    <ligand>
        <name>Ca(2+)</name>
        <dbReference type="ChEBI" id="CHEBI:29108"/>
        <label>2</label>
    </ligand>
</feature>
<feature type="binding site" evidence="1">
    <location>
        <position position="253"/>
    </location>
    <ligand>
        <name>Ca(2+)</name>
        <dbReference type="ChEBI" id="CHEBI:29108"/>
        <label>2</label>
    </ligand>
</feature>